<reference key="1">
    <citation type="journal article" date="2011" name="J. Bacteriol.">
        <title>Comparative genomics of 28 Salmonella enterica isolates: evidence for CRISPR-mediated adaptive sublineage evolution.</title>
        <authorList>
            <person name="Fricke W.F."/>
            <person name="Mammel M.K."/>
            <person name="McDermott P.F."/>
            <person name="Tartera C."/>
            <person name="White D.G."/>
            <person name="Leclerc J.E."/>
            <person name="Ravel J."/>
            <person name="Cebula T.A."/>
        </authorList>
    </citation>
    <scope>NUCLEOTIDE SEQUENCE [LARGE SCALE GENOMIC DNA]</scope>
    <source>
        <strain>CVM19633</strain>
    </source>
</reference>
<name>LPLT_SALSV</name>
<accession>B4TUM8</accession>
<keyword id="KW-0997">Cell inner membrane</keyword>
<keyword id="KW-1003">Cell membrane</keyword>
<keyword id="KW-0445">Lipid transport</keyword>
<keyword id="KW-0472">Membrane</keyword>
<keyword id="KW-0812">Transmembrane</keyword>
<keyword id="KW-1133">Transmembrane helix</keyword>
<keyword id="KW-0813">Transport</keyword>
<gene>
    <name evidence="1" type="primary">lplT</name>
    <name type="ordered locus">SeSA_A3174</name>
</gene>
<proteinExistence type="inferred from homology"/>
<sequence length="400" mass="41588">MSESVRTNTSIWSKGMLSVIVAQFLSAFGDNALLFATLALLKAQFYPDWSQPVLQMVFVGAYILFAPFVGQIADSFAKGRVMMVANGLKLAGAAGVCLGINPFVGYTLVGIGAAAYSPAKYGILGELTTGDKLVKANGLMEASTIAAILLGSVAGGVLADWHVIAALVACALAYAGAVAANLFIPKLVAARPGQSWRLSAMTRSFFCACVVLWRNGETRFSLVGTGLFWGAGVTLRFLLVLWVPVALGITDNATPTYLNAMVAVGIVVGAGAAAKLVTLETVSRCMPAGILIGVVVAIFSLQHALLPAYALLLLIGMLGGFFVVPLNALLQERGKKSVGAGNAIAVQNLGENSAMLLMLGLYSLAVLVGVPAVAIGIGFGVLFALAIAALWIWQRRQASY</sequence>
<organism>
    <name type="scientific">Salmonella schwarzengrund (strain CVM19633)</name>
    <dbReference type="NCBI Taxonomy" id="439843"/>
    <lineage>
        <taxon>Bacteria</taxon>
        <taxon>Pseudomonadati</taxon>
        <taxon>Pseudomonadota</taxon>
        <taxon>Gammaproteobacteria</taxon>
        <taxon>Enterobacterales</taxon>
        <taxon>Enterobacteriaceae</taxon>
        <taxon>Salmonella</taxon>
    </lineage>
</organism>
<dbReference type="EMBL" id="CP001127">
    <property type="protein sequence ID" value="ACF88972.1"/>
    <property type="molecule type" value="Genomic_DNA"/>
</dbReference>
<dbReference type="RefSeq" id="WP_000004690.1">
    <property type="nucleotide sequence ID" value="NC_011094.1"/>
</dbReference>
<dbReference type="SMR" id="B4TUM8"/>
<dbReference type="KEGG" id="sew:SeSA_A3174"/>
<dbReference type="HOGENOM" id="CLU_047399_0_0_6"/>
<dbReference type="Proteomes" id="UP000001865">
    <property type="component" value="Chromosome"/>
</dbReference>
<dbReference type="GO" id="GO:0005886">
    <property type="term" value="C:plasma membrane"/>
    <property type="evidence" value="ECO:0007669"/>
    <property type="project" value="UniProtKB-SubCell"/>
</dbReference>
<dbReference type="GO" id="GO:0051978">
    <property type="term" value="F:lysophospholipid:sodium symporter activity"/>
    <property type="evidence" value="ECO:0007669"/>
    <property type="project" value="InterPro"/>
</dbReference>
<dbReference type="CDD" id="cd06173">
    <property type="entry name" value="MFS_MefA_like"/>
    <property type="match status" value="1"/>
</dbReference>
<dbReference type="Gene3D" id="1.20.1250.20">
    <property type="entry name" value="MFS general substrate transporter like domains"/>
    <property type="match status" value="1"/>
</dbReference>
<dbReference type="HAMAP" id="MF_01585">
    <property type="entry name" value="MFS_LplT"/>
    <property type="match status" value="1"/>
</dbReference>
<dbReference type="InterPro" id="IPR023727">
    <property type="entry name" value="LysoPLipid__transptr_LplT"/>
</dbReference>
<dbReference type="InterPro" id="IPR011701">
    <property type="entry name" value="MFS"/>
</dbReference>
<dbReference type="InterPro" id="IPR036259">
    <property type="entry name" value="MFS_trans_sf"/>
</dbReference>
<dbReference type="NCBIfam" id="NF008397">
    <property type="entry name" value="PRK11195.1"/>
    <property type="match status" value="1"/>
</dbReference>
<dbReference type="PANTHER" id="PTHR43266">
    <property type="entry name" value="MACROLIDE-EFFLUX PROTEIN"/>
    <property type="match status" value="1"/>
</dbReference>
<dbReference type="PANTHER" id="PTHR43266:SF2">
    <property type="entry name" value="MAJOR FACILITATOR SUPERFAMILY (MFS) PROFILE DOMAIN-CONTAINING PROTEIN"/>
    <property type="match status" value="1"/>
</dbReference>
<dbReference type="Pfam" id="PF07690">
    <property type="entry name" value="MFS_1"/>
    <property type="match status" value="1"/>
</dbReference>
<dbReference type="SUPFAM" id="SSF103473">
    <property type="entry name" value="MFS general substrate transporter"/>
    <property type="match status" value="1"/>
</dbReference>
<feature type="chain" id="PRO_1000201280" description="Lysophospholipid transporter LplT">
    <location>
        <begin position="1"/>
        <end position="400"/>
    </location>
</feature>
<feature type="transmembrane region" description="Helical" evidence="1">
    <location>
        <begin position="19"/>
        <end position="39"/>
    </location>
</feature>
<feature type="transmembrane region" description="Helical" evidence="1">
    <location>
        <begin position="53"/>
        <end position="73"/>
    </location>
</feature>
<feature type="transmembrane region" description="Helical" evidence="1">
    <location>
        <begin position="91"/>
        <end position="111"/>
    </location>
</feature>
<feature type="transmembrane region" description="Helical" evidence="1">
    <location>
        <begin position="139"/>
        <end position="159"/>
    </location>
</feature>
<feature type="transmembrane region" description="Helical" evidence="1">
    <location>
        <begin position="164"/>
        <end position="184"/>
    </location>
</feature>
<feature type="transmembrane region" description="Helical" evidence="1">
    <location>
        <begin position="195"/>
        <end position="213"/>
    </location>
</feature>
<feature type="transmembrane region" description="Helical" evidence="1">
    <location>
        <begin position="227"/>
        <end position="247"/>
    </location>
</feature>
<feature type="transmembrane region" description="Helical" evidence="1">
    <location>
        <begin position="257"/>
        <end position="277"/>
    </location>
</feature>
<feature type="transmembrane region" description="Helical" evidence="1">
    <location>
        <begin position="281"/>
        <end position="301"/>
    </location>
</feature>
<feature type="transmembrane region" description="Helical" evidence="1">
    <location>
        <begin position="304"/>
        <end position="324"/>
    </location>
</feature>
<feature type="transmembrane region" description="Helical" evidence="1">
    <location>
        <begin position="352"/>
        <end position="372"/>
    </location>
</feature>
<feature type="transmembrane region" description="Helical" evidence="1">
    <location>
        <begin position="373"/>
        <end position="393"/>
    </location>
</feature>
<protein>
    <recommendedName>
        <fullName evidence="1">Lysophospholipid transporter LplT</fullName>
    </recommendedName>
</protein>
<evidence type="ECO:0000255" key="1">
    <source>
        <dbReference type="HAMAP-Rule" id="MF_01585"/>
    </source>
</evidence>
<comment type="function">
    <text evidence="1">Catalyzes the facilitated diffusion of 2-acyl-glycero-3-phosphoethanolamine (2-acyl-GPE) into the cell.</text>
</comment>
<comment type="subcellular location">
    <subcellularLocation>
        <location evidence="1">Cell inner membrane</location>
        <topology evidence="1">Multi-pass membrane protein</topology>
    </subcellularLocation>
</comment>
<comment type="similarity">
    <text evidence="1">Belongs to the major facilitator superfamily. LplT (TC 2.A.1.42) family.</text>
</comment>